<reference evidence="6" key="1">
    <citation type="journal article" date="1997" name="Mol. Biochem. Parasitol.">
        <title>Unusual genome organisation in Entamoeba histolytica leads to two overlapping transcripts.</title>
        <authorList>
            <person name="Gangopadhyay S.S."/>
            <person name="Ray S.S."/>
            <person name="Sinha P."/>
            <person name="Lohia A."/>
        </authorList>
    </citation>
    <scope>NUCLEOTIDE SEQUENCE [GENOMIC DNA]</scope>
    <source>
        <strain evidence="6">ATCC 30459 / HM-1:IMSS / ABRM</strain>
    </source>
</reference>
<reference evidence="7" key="2">
    <citation type="journal article" date="2005" name="Nature">
        <title>The genome of the protist parasite Entamoeba histolytica.</title>
        <authorList>
            <person name="Loftus B.J."/>
            <person name="Anderson I."/>
            <person name="Davies R."/>
            <person name="Alsmark U.C."/>
            <person name="Samuelson J."/>
            <person name="Amedeo P."/>
            <person name="Roncaglia P."/>
            <person name="Berriman M."/>
            <person name="Hirt R.P."/>
            <person name="Mann B.J."/>
            <person name="Nozaki T."/>
            <person name="Suh B."/>
            <person name="Pop M."/>
            <person name="Duchene M."/>
            <person name="Ackers J."/>
            <person name="Tannich E."/>
            <person name="Leippe M."/>
            <person name="Hofer M."/>
            <person name="Bruchhaus I."/>
            <person name="Willhoeft U."/>
            <person name="Bhattacharya A."/>
            <person name="Chillingworth T."/>
            <person name="Churcher C.M."/>
            <person name="Hance Z."/>
            <person name="Harris B."/>
            <person name="Harris D."/>
            <person name="Jagels K."/>
            <person name="Moule S."/>
            <person name="Mungall K.L."/>
            <person name="Ormond D."/>
            <person name="Squares R."/>
            <person name="Whitehead S."/>
            <person name="Quail M.A."/>
            <person name="Rabbinowitsch E."/>
            <person name="Norbertczak H."/>
            <person name="Price C."/>
            <person name="Wang Z."/>
            <person name="Guillen N."/>
            <person name="Gilchrist C."/>
            <person name="Stroup S.E."/>
            <person name="Bhattacharya S."/>
            <person name="Lohia A."/>
            <person name="Foster P.G."/>
            <person name="Sicheritz-Ponten T."/>
            <person name="Weber C."/>
            <person name="Singh U."/>
            <person name="Mukherjee C."/>
            <person name="El-Sayed N.M.A."/>
            <person name="Petri W.A."/>
            <person name="Clark C.G."/>
            <person name="Embley T.M."/>
            <person name="Barrell B.G."/>
            <person name="Fraser C.M."/>
            <person name="Hall N."/>
        </authorList>
    </citation>
    <scope>NUCLEOTIDE SEQUENCE [LARGE SCALE GENOMIC DNA]</scope>
    <source>
        <strain evidence="7">ATCC 30459 / HM-1:IMSS / ABRM</strain>
    </source>
</reference>
<reference key="3">
    <citation type="journal article" date="2005" name="Cell. Microbiol.">
        <title>Constitutive association of Mcm2-3-5 proteins with chromatin in Entamoeba histolytica.</title>
        <authorList>
            <person name="Das S."/>
            <person name="Mukherjee C."/>
            <person name="Sinha P."/>
            <person name="Lohia A."/>
        </authorList>
    </citation>
    <scope>FUNCTION</scope>
    <scope>SUBCELLULAR LOCATION</scope>
    <scope>DEVELOPMENTAL STAGE</scope>
</reference>
<dbReference type="EC" id="3.6.4.12" evidence="1"/>
<dbReference type="EMBL" id="X98048">
    <property type="protein sequence ID" value="CAA66661.1"/>
    <property type="status" value="ALT_FRAME"/>
    <property type="molecule type" value="Genomic_DNA"/>
</dbReference>
<dbReference type="EMBL" id="DS571158">
    <property type="protein sequence ID" value="EAL47986.1"/>
    <property type="molecule type" value="Genomic_DNA"/>
</dbReference>
<dbReference type="RefSeq" id="XP_653372.1">
    <property type="nucleotide sequence ID" value="XM_648280.1"/>
</dbReference>
<dbReference type="SMR" id="Q24849"/>
<dbReference type="STRING" id="5759.C4LVK4"/>
<dbReference type="EnsemblProtists" id="GAT92701">
    <property type="protein sequence ID" value="GAT92701"/>
    <property type="gene ID" value="CL6EHI_103600"/>
</dbReference>
<dbReference type="EnsemblProtists" id="rna_EHI_103600-1">
    <property type="protein sequence ID" value="rna_EHI_103600-1"/>
    <property type="gene ID" value="EHI_103600"/>
</dbReference>
<dbReference type="GeneID" id="3407679"/>
<dbReference type="KEGG" id="ehi:EHI_103600"/>
<dbReference type="VEuPathDB" id="AmoebaDB:EHI5A_077240"/>
<dbReference type="VEuPathDB" id="AmoebaDB:EHI7A_062040"/>
<dbReference type="VEuPathDB" id="AmoebaDB:EHI8A_049600"/>
<dbReference type="VEuPathDB" id="AmoebaDB:EHI_103600"/>
<dbReference type="VEuPathDB" id="AmoebaDB:KM1_109070"/>
<dbReference type="eggNOG" id="KOG0479">
    <property type="taxonomic scope" value="Eukaryota"/>
</dbReference>
<dbReference type="HOGENOM" id="CLU_000995_6_0_1"/>
<dbReference type="OMA" id="EANHIMV"/>
<dbReference type="OrthoDB" id="1882346at2759"/>
<dbReference type="Proteomes" id="UP000001926">
    <property type="component" value="Partially assembled WGS sequence"/>
</dbReference>
<dbReference type="GO" id="GO:0000785">
    <property type="term" value="C:chromatin"/>
    <property type="evidence" value="ECO:0000314"/>
    <property type="project" value="UniProtKB"/>
</dbReference>
<dbReference type="GO" id="GO:0042555">
    <property type="term" value="C:MCM complex"/>
    <property type="evidence" value="ECO:0000318"/>
    <property type="project" value="GO_Central"/>
</dbReference>
<dbReference type="GO" id="GO:0005654">
    <property type="term" value="C:nucleoplasm"/>
    <property type="evidence" value="ECO:0000314"/>
    <property type="project" value="UniProtKB"/>
</dbReference>
<dbReference type="GO" id="GO:0005634">
    <property type="term" value="C:nucleus"/>
    <property type="evidence" value="ECO:0000318"/>
    <property type="project" value="GO_Central"/>
</dbReference>
<dbReference type="GO" id="GO:0005524">
    <property type="term" value="F:ATP binding"/>
    <property type="evidence" value="ECO:0007669"/>
    <property type="project" value="UniProtKB-KW"/>
</dbReference>
<dbReference type="GO" id="GO:0016887">
    <property type="term" value="F:ATP hydrolysis activity"/>
    <property type="evidence" value="ECO:0007669"/>
    <property type="project" value="InterPro"/>
</dbReference>
<dbReference type="GO" id="GO:0004386">
    <property type="term" value="F:helicase activity"/>
    <property type="evidence" value="ECO:0007669"/>
    <property type="project" value="UniProtKB-KW"/>
</dbReference>
<dbReference type="GO" id="GO:0003697">
    <property type="term" value="F:single-stranded DNA binding"/>
    <property type="evidence" value="ECO:0000318"/>
    <property type="project" value="GO_Central"/>
</dbReference>
<dbReference type="GO" id="GO:0006271">
    <property type="term" value="P:DNA strand elongation involved in DNA replication"/>
    <property type="evidence" value="ECO:0000318"/>
    <property type="project" value="GO_Central"/>
</dbReference>
<dbReference type="GO" id="GO:0000727">
    <property type="term" value="P:double-strand break repair via break-induced replication"/>
    <property type="evidence" value="ECO:0000318"/>
    <property type="project" value="GO_Central"/>
</dbReference>
<dbReference type="GO" id="GO:1902975">
    <property type="term" value="P:mitotic DNA replication initiation"/>
    <property type="evidence" value="ECO:0000318"/>
    <property type="project" value="GO_Central"/>
</dbReference>
<dbReference type="CDD" id="cd17754">
    <property type="entry name" value="MCM3"/>
    <property type="match status" value="1"/>
</dbReference>
<dbReference type="FunFam" id="2.20.28.10:FF:000025">
    <property type="entry name" value="DNA replication licensing factor MCM3"/>
    <property type="match status" value="1"/>
</dbReference>
<dbReference type="Gene3D" id="2.20.28.10">
    <property type="match status" value="1"/>
</dbReference>
<dbReference type="Gene3D" id="2.40.50.140">
    <property type="entry name" value="Nucleic acid-binding proteins"/>
    <property type="match status" value="1"/>
</dbReference>
<dbReference type="Gene3D" id="3.40.50.300">
    <property type="entry name" value="P-loop containing nucleotide triphosphate hydrolases"/>
    <property type="match status" value="1"/>
</dbReference>
<dbReference type="InterPro" id="IPR003593">
    <property type="entry name" value="AAA+_ATPase"/>
</dbReference>
<dbReference type="InterPro" id="IPR031327">
    <property type="entry name" value="MCM"/>
</dbReference>
<dbReference type="InterPro" id="IPR008046">
    <property type="entry name" value="Mcm3"/>
</dbReference>
<dbReference type="InterPro" id="IPR018525">
    <property type="entry name" value="MCM_CS"/>
</dbReference>
<dbReference type="InterPro" id="IPR001208">
    <property type="entry name" value="MCM_dom"/>
</dbReference>
<dbReference type="InterPro" id="IPR041562">
    <property type="entry name" value="MCM_lid"/>
</dbReference>
<dbReference type="InterPro" id="IPR033762">
    <property type="entry name" value="MCM_OB"/>
</dbReference>
<dbReference type="InterPro" id="IPR012340">
    <property type="entry name" value="NA-bd_OB-fold"/>
</dbReference>
<dbReference type="InterPro" id="IPR027417">
    <property type="entry name" value="P-loop_NTPase"/>
</dbReference>
<dbReference type="PANTHER" id="PTHR11630">
    <property type="entry name" value="DNA REPLICATION LICENSING FACTOR MCM FAMILY MEMBER"/>
    <property type="match status" value="1"/>
</dbReference>
<dbReference type="PANTHER" id="PTHR11630:SF46">
    <property type="entry name" value="DNA REPLICATION LICENSING FACTOR MCM3-RELATED"/>
    <property type="match status" value="1"/>
</dbReference>
<dbReference type="Pfam" id="PF00493">
    <property type="entry name" value="MCM"/>
    <property type="match status" value="1"/>
</dbReference>
<dbReference type="Pfam" id="PF17855">
    <property type="entry name" value="MCM_lid"/>
    <property type="match status" value="1"/>
</dbReference>
<dbReference type="Pfam" id="PF17207">
    <property type="entry name" value="MCM_OB"/>
    <property type="match status" value="1"/>
</dbReference>
<dbReference type="PRINTS" id="PR01657">
    <property type="entry name" value="MCMFAMILY"/>
</dbReference>
<dbReference type="PRINTS" id="PR01659">
    <property type="entry name" value="MCMPROTEIN3"/>
</dbReference>
<dbReference type="SMART" id="SM00382">
    <property type="entry name" value="AAA"/>
    <property type="match status" value="1"/>
</dbReference>
<dbReference type="SMART" id="SM00350">
    <property type="entry name" value="MCM"/>
    <property type="match status" value="1"/>
</dbReference>
<dbReference type="SUPFAM" id="SSF50249">
    <property type="entry name" value="Nucleic acid-binding proteins"/>
    <property type="match status" value="1"/>
</dbReference>
<dbReference type="SUPFAM" id="SSF52540">
    <property type="entry name" value="P-loop containing nucleoside triphosphate hydrolases"/>
    <property type="match status" value="1"/>
</dbReference>
<dbReference type="PROSITE" id="PS00847">
    <property type="entry name" value="MCM_1"/>
    <property type="match status" value="1"/>
</dbReference>
<dbReference type="PROSITE" id="PS50051">
    <property type="entry name" value="MCM_2"/>
    <property type="match status" value="1"/>
</dbReference>
<sequence length="601" mass="66924">MEGHIHHITPRNITASILQQKVAVQGIITKSSQIRPLLQTAVQFCPLDYSTHARDLSHADVMVKLSSKTPDGKPLELEPGLSTYKDFQTLVVQEMPESAPTGQMPRSVIVILLDQLVDKGKPGDRVIINGTLKALAGPNHSSTFKVVLEAENINTLQSEGPELTEIDKENIKKVMKEENPINLLSKSIAPSIYGHSDVKKAILLMLVGATPKIRLRSRVRGDIHVMLCGDPSTAKSQLLRYVMSIAPLAVSTNGRGATGVGLTAAVVNDPDTNQRTLEAGAMVLADRGIVCVDEFDKMSIEDRAAMHEVMEQQTVTVQKAGIHTALNARCSILAAANPSNGNYDVKKSPMENLYFPESLLSRFDLIFIILDSSTEELDRRLSQHVLKMHRHFDALTEQRGDDEVNVLALVDAEREKIGDAPVYQDTSLYEGEKLFTNKFIKKYVTYARNLPTPSLSESASETIADAYVKLRENERLKRIKHNFKIKTLPITARALDSLIRLAEAHARIRGSDTIDEIDAQVAVQLIFYAHFDENWEGNITTDIARKVREYLTNELIAECKDVIQFDDILSICGIDKPTLMKILPQLSFGYDEDEEFVYKQN</sequence>
<gene>
    <name evidence="4" type="primary">MCM3</name>
    <name evidence="7" type="ORF">EHI_103600</name>
</gene>
<proteinExistence type="evidence at protein level"/>
<accession>Q24849</accession>
<accession>A0A175JG91</accession>
<accession>C4LVK4</accession>
<protein>
    <recommendedName>
        <fullName>DNA replication licensing factor MCM3</fullName>
        <shortName evidence="4">EhMCM3</shortName>
        <ecNumber evidence="1">3.6.4.12</ecNumber>
    </recommendedName>
</protein>
<comment type="function">
    <text evidence="1 3">Acts as a component of the MCM2-7 complex (MCM complex) which is the replicative helicase essential for DNA replication initiation and elongation in eukaryotic cells (By similarity). Required for DNA replication and cell proliferation (PubMed:15659069). The active ATPase sites in the MCM2-7 ring are formed through the interaction surfaces of two neighboring subunits such that a critical structure of a conserved arginine finger motif is provided in trans relative to the ATP-binding site of the Walker A box of the adjacent subunit (By similarity).</text>
</comment>
<comment type="catalytic activity">
    <reaction evidence="1">
        <text>ATP + H2O = ADP + phosphate + H(+)</text>
        <dbReference type="Rhea" id="RHEA:13065"/>
        <dbReference type="ChEBI" id="CHEBI:15377"/>
        <dbReference type="ChEBI" id="CHEBI:15378"/>
        <dbReference type="ChEBI" id="CHEBI:30616"/>
        <dbReference type="ChEBI" id="CHEBI:43474"/>
        <dbReference type="ChEBI" id="CHEBI:456216"/>
        <dbReference type="EC" id="3.6.4.12"/>
    </reaction>
</comment>
<comment type="subunit">
    <text evidence="1">Component of the MCM2-7 complex.</text>
</comment>
<comment type="subcellular location">
    <subcellularLocation>
        <location evidence="3">Nucleus</location>
    </subcellularLocation>
    <subcellularLocation>
        <location evidence="3">Chromosome</location>
    </subcellularLocation>
    <subcellularLocation>
        <location evidence="3">Nucleus</location>
        <location evidence="3">Nucleoplasm</location>
    </subcellularLocation>
    <text evidence="3">Constitutively associates with chromatin.</text>
</comment>
<comment type="developmental stage">
    <text evidence="3">Expressed in trophozoites (at protein level).</text>
</comment>
<comment type="similarity">
    <text evidence="5">Belongs to the MCM family.</text>
</comment>
<comment type="caution">
    <text evidence="5">In most eukaryotes, the MCM complex prevents DNA reduplication resulting in one round of DNA replication per cell cycle. However, in E.histolytica, DNA reduplication occurs several times before nuclear division and two to three nuclei may form before cell division, suggesting that the cell cycle checkpoints are either absent or turned off during parasite proliferation.</text>
</comment>
<comment type="sequence caution" evidence="5">
    <conflict type="frameshift">
        <sequence resource="EMBL-CDS" id="CAA66661"/>
    </conflict>
</comment>
<keyword id="KW-0067">ATP-binding</keyword>
<keyword id="KW-0131">Cell cycle</keyword>
<keyword id="KW-0158">Chromosome</keyword>
<keyword id="KW-0235">DNA replication</keyword>
<keyword id="KW-0238">DNA-binding</keyword>
<keyword id="KW-0347">Helicase</keyword>
<keyword id="KW-0378">Hydrolase</keyword>
<keyword id="KW-0547">Nucleotide-binding</keyword>
<keyword id="KW-0539">Nucleus</keyword>
<keyword id="KW-1185">Reference proteome</keyword>
<evidence type="ECO:0000250" key="1">
    <source>
        <dbReference type="UniProtKB" id="P25205"/>
    </source>
</evidence>
<evidence type="ECO:0000255" key="2"/>
<evidence type="ECO:0000269" key="3">
    <source>
    </source>
</evidence>
<evidence type="ECO:0000303" key="4">
    <source>
    </source>
</evidence>
<evidence type="ECO:0000305" key="5"/>
<evidence type="ECO:0000312" key="6">
    <source>
        <dbReference type="EMBL" id="CAA66661.1"/>
    </source>
</evidence>
<evidence type="ECO:0000312" key="7">
    <source>
        <dbReference type="EMBL" id="EAL47986.1"/>
    </source>
</evidence>
<organism evidence="7">
    <name type="scientific">Entamoeba histolytica (strain ATCC 30459 / HM-1:IMSS / ABRM)</name>
    <dbReference type="NCBI Taxonomy" id="294381"/>
    <lineage>
        <taxon>Eukaryota</taxon>
        <taxon>Amoebozoa</taxon>
        <taxon>Evosea</taxon>
        <taxon>Archamoebae</taxon>
        <taxon>Mastigamoebida</taxon>
        <taxon>Entamoebidae</taxon>
        <taxon>Entamoeba</taxon>
    </lineage>
</organism>
<feature type="chain" id="PRO_0000194096" description="DNA replication licensing factor MCM3">
    <location>
        <begin position="1"/>
        <end position="601"/>
    </location>
</feature>
<feature type="domain" description="MCM" evidence="2">
    <location>
        <begin position="180"/>
        <end position="386"/>
    </location>
</feature>
<feature type="short sequence motif" description="Arginine finger">
    <location>
        <begin position="361"/>
        <end position="364"/>
    </location>
</feature>
<feature type="binding site" evidence="2">
    <location>
        <begin position="229"/>
        <end position="236"/>
    </location>
    <ligand>
        <name>ATP</name>
        <dbReference type="ChEBI" id="CHEBI:30616"/>
    </ligand>
</feature>
<feature type="sequence conflict" description="In Ref. 1; CAA66661." evidence="5" ref="1">
    <original>L</original>
    <variation>F</variation>
    <location>
        <position position="184"/>
    </location>
</feature>
<feature type="sequence conflict" description="In Ref. 1; CAA66661." evidence="5" ref="1">
    <original>V</original>
    <variation>C</variation>
    <location>
        <position position="290"/>
    </location>
</feature>
<feature type="sequence conflict" description="In Ref. 1; CAA66661." evidence="5" ref="1">
    <original>V</original>
    <variation>F</variation>
    <location>
        <position position="345"/>
    </location>
</feature>
<feature type="sequence conflict" description="In Ref. 1; CAA66661." evidence="5" ref="1">
    <original>R</original>
    <variation>K</variation>
    <location>
        <position position="380"/>
    </location>
</feature>
<feature type="sequence conflict" description="In Ref. 1; CAA66661." evidence="5" ref="1">
    <original>FYAHFDEN</original>
    <variation>LMKI</variation>
    <location>
        <begin position="527"/>
        <end position="534"/>
    </location>
</feature>
<feature type="sequence conflict" description="In Ref. 1; CAA66661." evidence="5" ref="1">
    <original>D</original>
    <variation>H</variation>
    <location>
        <position position="542"/>
    </location>
</feature>
<name>MCM3_ENTH1</name>